<comment type="function">
    <text evidence="1">This protein binds to 23S rRNA in the presence of protein L20.</text>
</comment>
<comment type="subunit">
    <text evidence="1">Part of the 50S ribosomal subunit. Contacts protein L20.</text>
</comment>
<comment type="similarity">
    <text evidence="1">Belongs to the bacterial ribosomal protein bL21 family.</text>
</comment>
<dbReference type="EMBL" id="AE017125">
    <property type="protein sequence ID" value="AAP76607.1"/>
    <property type="molecule type" value="Genomic_DNA"/>
</dbReference>
<dbReference type="RefSeq" id="WP_011114853.1">
    <property type="nucleotide sequence ID" value="NC_004917.1"/>
</dbReference>
<dbReference type="SMR" id="Q7VK82"/>
<dbReference type="STRING" id="235279.HH_0010"/>
<dbReference type="KEGG" id="hhe:HH_0010"/>
<dbReference type="eggNOG" id="COG0261">
    <property type="taxonomic scope" value="Bacteria"/>
</dbReference>
<dbReference type="HOGENOM" id="CLU_061463_3_2_7"/>
<dbReference type="OrthoDB" id="9813334at2"/>
<dbReference type="Proteomes" id="UP000002495">
    <property type="component" value="Chromosome"/>
</dbReference>
<dbReference type="GO" id="GO:0005737">
    <property type="term" value="C:cytoplasm"/>
    <property type="evidence" value="ECO:0007669"/>
    <property type="project" value="UniProtKB-ARBA"/>
</dbReference>
<dbReference type="GO" id="GO:1990904">
    <property type="term" value="C:ribonucleoprotein complex"/>
    <property type="evidence" value="ECO:0007669"/>
    <property type="project" value="UniProtKB-KW"/>
</dbReference>
<dbReference type="GO" id="GO:0005840">
    <property type="term" value="C:ribosome"/>
    <property type="evidence" value="ECO:0007669"/>
    <property type="project" value="UniProtKB-KW"/>
</dbReference>
<dbReference type="GO" id="GO:0019843">
    <property type="term" value="F:rRNA binding"/>
    <property type="evidence" value="ECO:0007669"/>
    <property type="project" value="UniProtKB-UniRule"/>
</dbReference>
<dbReference type="GO" id="GO:0003735">
    <property type="term" value="F:structural constituent of ribosome"/>
    <property type="evidence" value="ECO:0007669"/>
    <property type="project" value="InterPro"/>
</dbReference>
<dbReference type="GO" id="GO:0006412">
    <property type="term" value="P:translation"/>
    <property type="evidence" value="ECO:0007669"/>
    <property type="project" value="UniProtKB-UniRule"/>
</dbReference>
<dbReference type="HAMAP" id="MF_01363">
    <property type="entry name" value="Ribosomal_bL21"/>
    <property type="match status" value="1"/>
</dbReference>
<dbReference type="InterPro" id="IPR028909">
    <property type="entry name" value="bL21-like"/>
</dbReference>
<dbReference type="InterPro" id="IPR036164">
    <property type="entry name" value="bL21-like_sf"/>
</dbReference>
<dbReference type="InterPro" id="IPR001787">
    <property type="entry name" value="Ribosomal_bL21"/>
</dbReference>
<dbReference type="InterPro" id="IPR018258">
    <property type="entry name" value="Ribosomal_bL21_CS"/>
</dbReference>
<dbReference type="NCBIfam" id="TIGR00061">
    <property type="entry name" value="L21"/>
    <property type="match status" value="1"/>
</dbReference>
<dbReference type="PANTHER" id="PTHR21349">
    <property type="entry name" value="50S RIBOSOMAL PROTEIN L21"/>
    <property type="match status" value="1"/>
</dbReference>
<dbReference type="PANTHER" id="PTHR21349:SF0">
    <property type="entry name" value="LARGE RIBOSOMAL SUBUNIT PROTEIN BL21M"/>
    <property type="match status" value="1"/>
</dbReference>
<dbReference type="Pfam" id="PF00829">
    <property type="entry name" value="Ribosomal_L21p"/>
    <property type="match status" value="1"/>
</dbReference>
<dbReference type="SUPFAM" id="SSF141091">
    <property type="entry name" value="L21p-like"/>
    <property type="match status" value="1"/>
</dbReference>
<dbReference type="PROSITE" id="PS01169">
    <property type="entry name" value="RIBOSOMAL_L21"/>
    <property type="match status" value="1"/>
</dbReference>
<keyword id="KW-1185">Reference proteome</keyword>
<keyword id="KW-0687">Ribonucleoprotein</keyword>
<keyword id="KW-0689">Ribosomal protein</keyword>
<keyword id="KW-0694">RNA-binding</keyword>
<keyword id="KW-0699">rRNA-binding</keyword>
<proteinExistence type="inferred from homology"/>
<gene>
    <name evidence="1" type="primary">rplU</name>
    <name type="ordered locus">HH_0010</name>
</gene>
<feature type="chain" id="PRO_0000270674" description="Large ribosomal subunit protein bL21">
    <location>
        <begin position="1"/>
        <end position="104"/>
    </location>
</feature>
<organism>
    <name type="scientific">Helicobacter hepaticus (strain ATCC 51449 / 3B1)</name>
    <dbReference type="NCBI Taxonomy" id="235279"/>
    <lineage>
        <taxon>Bacteria</taxon>
        <taxon>Pseudomonadati</taxon>
        <taxon>Campylobacterota</taxon>
        <taxon>Epsilonproteobacteria</taxon>
        <taxon>Campylobacterales</taxon>
        <taxon>Helicobacteraceae</taxon>
        <taxon>Helicobacter</taxon>
    </lineage>
</organism>
<protein>
    <recommendedName>
        <fullName evidence="1">Large ribosomal subunit protein bL21</fullName>
    </recommendedName>
    <alternativeName>
        <fullName evidence="2">50S ribosomal protein L21</fullName>
    </alternativeName>
</protein>
<evidence type="ECO:0000255" key="1">
    <source>
        <dbReference type="HAMAP-Rule" id="MF_01363"/>
    </source>
</evidence>
<evidence type="ECO:0000305" key="2"/>
<name>RL21_HELHP</name>
<accession>Q7VK82</accession>
<reference key="1">
    <citation type="journal article" date="2003" name="Proc. Natl. Acad. Sci. U.S.A.">
        <title>The complete genome sequence of the carcinogenic bacterium Helicobacter hepaticus.</title>
        <authorList>
            <person name="Suerbaum S."/>
            <person name="Josenhans C."/>
            <person name="Sterzenbach T."/>
            <person name="Drescher B."/>
            <person name="Brandt P."/>
            <person name="Bell M."/>
            <person name="Droege M."/>
            <person name="Fartmann B."/>
            <person name="Fischer H.-P."/>
            <person name="Ge Z."/>
            <person name="Hoerster A."/>
            <person name="Holland R."/>
            <person name="Klein K."/>
            <person name="Koenig J."/>
            <person name="Macko L."/>
            <person name="Mendz G.L."/>
            <person name="Nyakatura G."/>
            <person name="Schauer D.B."/>
            <person name="Shen Z."/>
            <person name="Weber J."/>
            <person name="Frosch M."/>
            <person name="Fox J.G."/>
        </authorList>
    </citation>
    <scope>NUCLEOTIDE SEQUENCE [LARGE SCALE GENOMIC DNA]</scope>
    <source>
        <strain>ATCC 51449 / 3B1</strain>
    </source>
</reference>
<sequence>MYAIFKNGGKQYKVVEGSIILLDKMSLEPKSKVELNEVLAIVDGDKTDVGTPFVKGAKIEAEVINEGRGKKVVTFKKRRRKDSKTKRGFRRDFTRVRILKIVAK</sequence>